<accession>A3NAU7</accession>
<name>EFTS_BURP6</name>
<protein>
    <recommendedName>
        <fullName evidence="1">Elongation factor Ts</fullName>
        <shortName evidence="1">EF-Ts</shortName>
    </recommendedName>
</protein>
<sequence>MAAITASMVAELRAKTDAPMMECKKALTEADGDMAKAEELLRVKLGNKASKAASRVTAEGVVASFVGANAGALVELNCETDFVAKNDDFNAFAKTVAELVATQNPADVAALSALPLDGKTVDEVRLALVGKIGENISIRRFVRFETSNKLATYLHGSRIGVIVEYTGAQEQVGKDVAMHVAAMKPVSLSADEVPADLIEKERRVAEQKAAESGKPAEIVAKMVDGSVQKFLKEVSLLNQPFVKNDKQTIEQMLKAADAAVQKFALFVVGEGIEKRQDDFAAEVAAQVAAAKQQ</sequence>
<proteinExistence type="inferred from homology"/>
<gene>
    <name evidence="1" type="primary">tsf</name>
    <name type="ordered locus">BURPS668_2436</name>
</gene>
<comment type="function">
    <text evidence="1">Associates with the EF-Tu.GDP complex and induces the exchange of GDP to GTP. It remains bound to the aminoacyl-tRNA.EF-Tu.GTP complex up to the GTP hydrolysis stage on the ribosome.</text>
</comment>
<comment type="subcellular location">
    <subcellularLocation>
        <location evidence="1">Cytoplasm</location>
    </subcellularLocation>
</comment>
<comment type="similarity">
    <text evidence="1">Belongs to the EF-Ts family.</text>
</comment>
<organism>
    <name type="scientific">Burkholderia pseudomallei (strain 668)</name>
    <dbReference type="NCBI Taxonomy" id="320373"/>
    <lineage>
        <taxon>Bacteria</taxon>
        <taxon>Pseudomonadati</taxon>
        <taxon>Pseudomonadota</taxon>
        <taxon>Betaproteobacteria</taxon>
        <taxon>Burkholderiales</taxon>
        <taxon>Burkholderiaceae</taxon>
        <taxon>Burkholderia</taxon>
        <taxon>pseudomallei group</taxon>
    </lineage>
</organism>
<dbReference type="EMBL" id="CP000570">
    <property type="protein sequence ID" value="ABN81751.1"/>
    <property type="molecule type" value="Genomic_DNA"/>
</dbReference>
<dbReference type="RefSeq" id="WP_004197087.1">
    <property type="nucleotide sequence ID" value="NC_009074.1"/>
</dbReference>
<dbReference type="SMR" id="A3NAU7"/>
<dbReference type="GeneID" id="93060699"/>
<dbReference type="KEGG" id="bpd:BURPS668_2436"/>
<dbReference type="HOGENOM" id="CLU_047155_0_2_4"/>
<dbReference type="GO" id="GO:0005737">
    <property type="term" value="C:cytoplasm"/>
    <property type="evidence" value="ECO:0007669"/>
    <property type="project" value="UniProtKB-SubCell"/>
</dbReference>
<dbReference type="GO" id="GO:0003746">
    <property type="term" value="F:translation elongation factor activity"/>
    <property type="evidence" value="ECO:0007669"/>
    <property type="project" value="UniProtKB-UniRule"/>
</dbReference>
<dbReference type="CDD" id="cd14275">
    <property type="entry name" value="UBA_EF-Ts"/>
    <property type="match status" value="1"/>
</dbReference>
<dbReference type="FunFam" id="1.10.286.20:FF:000001">
    <property type="entry name" value="Elongation factor Ts"/>
    <property type="match status" value="1"/>
</dbReference>
<dbReference type="FunFam" id="1.10.8.10:FF:000001">
    <property type="entry name" value="Elongation factor Ts"/>
    <property type="match status" value="1"/>
</dbReference>
<dbReference type="Gene3D" id="1.10.286.20">
    <property type="match status" value="1"/>
</dbReference>
<dbReference type="Gene3D" id="1.10.8.10">
    <property type="entry name" value="DNA helicase RuvA subunit, C-terminal domain"/>
    <property type="match status" value="1"/>
</dbReference>
<dbReference type="Gene3D" id="3.30.479.20">
    <property type="entry name" value="Elongation factor Ts, dimerisation domain"/>
    <property type="match status" value="2"/>
</dbReference>
<dbReference type="HAMAP" id="MF_00050">
    <property type="entry name" value="EF_Ts"/>
    <property type="match status" value="1"/>
</dbReference>
<dbReference type="InterPro" id="IPR036402">
    <property type="entry name" value="EF-Ts_dimer_sf"/>
</dbReference>
<dbReference type="InterPro" id="IPR001816">
    <property type="entry name" value="Transl_elong_EFTs/EF1B"/>
</dbReference>
<dbReference type="InterPro" id="IPR014039">
    <property type="entry name" value="Transl_elong_EFTs/EF1B_dimer"/>
</dbReference>
<dbReference type="InterPro" id="IPR018101">
    <property type="entry name" value="Transl_elong_Ts_CS"/>
</dbReference>
<dbReference type="InterPro" id="IPR009060">
    <property type="entry name" value="UBA-like_sf"/>
</dbReference>
<dbReference type="NCBIfam" id="TIGR00116">
    <property type="entry name" value="tsf"/>
    <property type="match status" value="1"/>
</dbReference>
<dbReference type="PANTHER" id="PTHR11741">
    <property type="entry name" value="ELONGATION FACTOR TS"/>
    <property type="match status" value="1"/>
</dbReference>
<dbReference type="PANTHER" id="PTHR11741:SF0">
    <property type="entry name" value="ELONGATION FACTOR TS, MITOCHONDRIAL"/>
    <property type="match status" value="1"/>
</dbReference>
<dbReference type="Pfam" id="PF00889">
    <property type="entry name" value="EF_TS"/>
    <property type="match status" value="1"/>
</dbReference>
<dbReference type="SUPFAM" id="SSF54713">
    <property type="entry name" value="Elongation factor Ts (EF-Ts), dimerisation domain"/>
    <property type="match status" value="2"/>
</dbReference>
<dbReference type="SUPFAM" id="SSF46934">
    <property type="entry name" value="UBA-like"/>
    <property type="match status" value="1"/>
</dbReference>
<dbReference type="PROSITE" id="PS01127">
    <property type="entry name" value="EF_TS_2"/>
    <property type="match status" value="1"/>
</dbReference>
<feature type="chain" id="PRO_1000006067" description="Elongation factor Ts">
    <location>
        <begin position="1"/>
        <end position="293"/>
    </location>
</feature>
<feature type="region of interest" description="Involved in Mg(2+) ion dislocation from EF-Tu" evidence="1">
    <location>
        <begin position="80"/>
        <end position="83"/>
    </location>
</feature>
<evidence type="ECO:0000255" key="1">
    <source>
        <dbReference type="HAMAP-Rule" id="MF_00050"/>
    </source>
</evidence>
<keyword id="KW-0963">Cytoplasm</keyword>
<keyword id="KW-0251">Elongation factor</keyword>
<keyword id="KW-0648">Protein biosynthesis</keyword>
<reference key="1">
    <citation type="journal article" date="2010" name="Genome Biol. Evol.">
        <title>Continuing evolution of Burkholderia mallei through genome reduction and large-scale rearrangements.</title>
        <authorList>
            <person name="Losada L."/>
            <person name="Ronning C.M."/>
            <person name="DeShazer D."/>
            <person name="Woods D."/>
            <person name="Fedorova N."/>
            <person name="Kim H.S."/>
            <person name="Shabalina S.A."/>
            <person name="Pearson T.R."/>
            <person name="Brinkac L."/>
            <person name="Tan P."/>
            <person name="Nandi T."/>
            <person name="Crabtree J."/>
            <person name="Badger J."/>
            <person name="Beckstrom-Sternberg S."/>
            <person name="Saqib M."/>
            <person name="Schutzer S.E."/>
            <person name="Keim P."/>
            <person name="Nierman W.C."/>
        </authorList>
    </citation>
    <scope>NUCLEOTIDE SEQUENCE [LARGE SCALE GENOMIC DNA]</scope>
    <source>
        <strain>668</strain>
    </source>
</reference>